<accession>Q92I97</accession>
<organism>
    <name type="scientific">Rickettsia conorii (strain ATCC VR-613 / Malish 7)</name>
    <dbReference type="NCBI Taxonomy" id="272944"/>
    <lineage>
        <taxon>Bacteria</taxon>
        <taxon>Pseudomonadati</taxon>
        <taxon>Pseudomonadota</taxon>
        <taxon>Alphaproteobacteria</taxon>
        <taxon>Rickettsiales</taxon>
        <taxon>Rickettsiaceae</taxon>
        <taxon>Rickettsieae</taxon>
        <taxon>Rickettsia</taxon>
        <taxon>spotted fever group</taxon>
    </lineage>
</organism>
<comment type="function">
    <text evidence="1">Catalyzes the ATP-dependent amination of UTP to CTP with either L-glutamine or ammonia as the source of nitrogen. Regulates intracellular CTP levels through interactions with the four ribonucleotide triphosphates.</text>
</comment>
<comment type="catalytic activity">
    <reaction evidence="1">
        <text>UTP + L-glutamine + ATP + H2O = CTP + L-glutamate + ADP + phosphate + 2 H(+)</text>
        <dbReference type="Rhea" id="RHEA:26426"/>
        <dbReference type="ChEBI" id="CHEBI:15377"/>
        <dbReference type="ChEBI" id="CHEBI:15378"/>
        <dbReference type="ChEBI" id="CHEBI:29985"/>
        <dbReference type="ChEBI" id="CHEBI:30616"/>
        <dbReference type="ChEBI" id="CHEBI:37563"/>
        <dbReference type="ChEBI" id="CHEBI:43474"/>
        <dbReference type="ChEBI" id="CHEBI:46398"/>
        <dbReference type="ChEBI" id="CHEBI:58359"/>
        <dbReference type="ChEBI" id="CHEBI:456216"/>
        <dbReference type="EC" id="6.3.4.2"/>
    </reaction>
</comment>
<comment type="catalytic activity">
    <reaction evidence="1">
        <text>L-glutamine + H2O = L-glutamate + NH4(+)</text>
        <dbReference type="Rhea" id="RHEA:15889"/>
        <dbReference type="ChEBI" id="CHEBI:15377"/>
        <dbReference type="ChEBI" id="CHEBI:28938"/>
        <dbReference type="ChEBI" id="CHEBI:29985"/>
        <dbReference type="ChEBI" id="CHEBI:58359"/>
    </reaction>
</comment>
<comment type="catalytic activity">
    <reaction evidence="1">
        <text>UTP + NH4(+) + ATP = CTP + ADP + phosphate + 2 H(+)</text>
        <dbReference type="Rhea" id="RHEA:16597"/>
        <dbReference type="ChEBI" id="CHEBI:15378"/>
        <dbReference type="ChEBI" id="CHEBI:28938"/>
        <dbReference type="ChEBI" id="CHEBI:30616"/>
        <dbReference type="ChEBI" id="CHEBI:37563"/>
        <dbReference type="ChEBI" id="CHEBI:43474"/>
        <dbReference type="ChEBI" id="CHEBI:46398"/>
        <dbReference type="ChEBI" id="CHEBI:456216"/>
    </reaction>
</comment>
<comment type="activity regulation">
    <text evidence="1">Allosterically activated by GTP, when glutamine is the substrate; GTP has no effect on the reaction when ammonia is the substrate. The allosteric effector GTP functions by stabilizing the protein conformation that binds the tetrahedral intermediate(s) formed during glutamine hydrolysis. Inhibited by the product CTP, via allosteric rather than competitive inhibition.</text>
</comment>
<comment type="pathway">
    <text evidence="1">Pyrimidine metabolism; CTP biosynthesis via de novo pathway; CTP from UDP: step 2/2.</text>
</comment>
<comment type="subunit">
    <text evidence="1">Homotetramer.</text>
</comment>
<comment type="miscellaneous">
    <text evidence="1">CTPSs have evolved a hybrid strategy for distinguishing between UTP and CTP. The overlapping regions of the product feedback inhibitory and substrate sites recognize a common feature in both compounds, the triphosphate moiety. To differentiate isosteric substrate and product pyrimidine rings, an additional pocket far from the expected kinase/ligase catalytic site, specifically recognizes the cytosine and ribose portions of the product inhibitor.</text>
</comment>
<comment type="similarity">
    <text evidence="1">Belongs to the CTP synthase family.</text>
</comment>
<keyword id="KW-0067">ATP-binding</keyword>
<keyword id="KW-0315">Glutamine amidotransferase</keyword>
<keyword id="KW-0436">Ligase</keyword>
<keyword id="KW-0460">Magnesium</keyword>
<keyword id="KW-0479">Metal-binding</keyword>
<keyword id="KW-0547">Nucleotide-binding</keyword>
<keyword id="KW-0665">Pyrimidine biosynthesis</keyword>
<reference key="1">
    <citation type="journal article" date="2001" name="Science">
        <title>Mechanisms of evolution in Rickettsia conorii and R. prowazekii.</title>
        <authorList>
            <person name="Ogata H."/>
            <person name="Audic S."/>
            <person name="Renesto-Audiffren P."/>
            <person name="Fournier P.-E."/>
            <person name="Barbe V."/>
            <person name="Samson D."/>
            <person name="Roux V."/>
            <person name="Cossart P."/>
            <person name="Weissenbach J."/>
            <person name="Claverie J.-M."/>
            <person name="Raoult D."/>
        </authorList>
    </citation>
    <scope>NUCLEOTIDE SEQUENCE [LARGE SCALE GENOMIC DNA]</scope>
    <source>
        <strain>ATCC VR-613 / Malish 7</strain>
    </source>
</reference>
<name>PYRG_RICCN</name>
<sequence>MVHFIFVTGGVVSSLGKGLTAASLAMLLQAKGFRVSVRKLDPYLNIDPGTMNPHEHGEVYVTDDGAETDLDLGHYERFTGVSACKFDSITTGAIYSKLLKDERLGNYAGVTVQVIPHVTNIIKDFILSNTKGFDFIICEIGGTVGDIEGLPFFEAIRQIGNKLKSENCLFIHLTLLPYVKTARELKIKPTQHSVKALRAIGISPNILVCRAERNISKGEIDKISLLCNIESEYVVPAIDQKNIYLVPIAYHNSGLDNKVLKFFNINIMPSKLDKWHDIINRLKDSNSKVRIAIIAKYHKLKDAYKSVIEALDHAGIYYKYKIDLVWINAENLTEENINKKLLDIDGILVPGGFGERATKGTIIAIKYARTNNIPFFGICFGMQLATIEIAQNLIGIKDAVTEEFKVDGTKIIEKINKNCEDSKITIENVKKTMRLGSYPCSLVASTIAANAYKSLEINERHRHRYKFNNEFQNIFEKHGIVFSGFSKDEEIVEIIELPLLRWFVGVQFHPEFKSKPFEAHPLFIQFIKAAIEYNKCN</sequence>
<feature type="chain" id="PRO_0000138216" description="CTP synthase">
    <location>
        <begin position="1"/>
        <end position="537"/>
    </location>
</feature>
<feature type="domain" description="Glutamine amidotransferase type-1" evidence="1">
    <location>
        <begin position="290"/>
        <end position="536"/>
    </location>
</feature>
<feature type="region of interest" description="Amidoligase domain" evidence="1">
    <location>
        <begin position="1"/>
        <end position="265"/>
    </location>
</feature>
<feature type="active site" description="Nucleophile; for glutamine hydrolysis" evidence="1">
    <location>
        <position position="379"/>
    </location>
</feature>
<feature type="active site" evidence="1">
    <location>
        <position position="509"/>
    </location>
</feature>
<feature type="active site" evidence="1">
    <location>
        <position position="511"/>
    </location>
</feature>
<feature type="binding site" evidence="1">
    <location>
        <position position="13"/>
    </location>
    <ligand>
        <name>CTP</name>
        <dbReference type="ChEBI" id="CHEBI:37563"/>
        <note>allosteric inhibitor</note>
    </ligand>
</feature>
<feature type="binding site" evidence="1">
    <location>
        <position position="13"/>
    </location>
    <ligand>
        <name>UTP</name>
        <dbReference type="ChEBI" id="CHEBI:46398"/>
    </ligand>
</feature>
<feature type="binding site" evidence="1">
    <location>
        <begin position="14"/>
        <end position="19"/>
    </location>
    <ligand>
        <name>ATP</name>
        <dbReference type="ChEBI" id="CHEBI:30616"/>
    </ligand>
</feature>
<feature type="binding site" evidence="1">
    <location>
        <position position="71"/>
    </location>
    <ligand>
        <name>ATP</name>
        <dbReference type="ChEBI" id="CHEBI:30616"/>
    </ligand>
</feature>
<feature type="binding site" evidence="1">
    <location>
        <position position="71"/>
    </location>
    <ligand>
        <name>Mg(2+)</name>
        <dbReference type="ChEBI" id="CHEBI:18420"/>
    </ligand>
</feature>
<feature type="binding site" evidence="1">
    <location>
        <position position="139"/>
    </location>
    <ligand>
        <name>Mg(2+)</name>
        <dbReference type="ChEBI" id="CHEBI:18420"/>
    </ligand>
</feature>
<feature type="binding site" evidence="1">
    <location>
        <begin position="146"/>
        <end position="148"/>
    </location>
    <ligand>
        <name>CTP</name>
        <dbReference type="ChEBI" id="CHEBI:37563"/>
        <note>allosteric inhibitor</note>
    </ligand>
</feature>
<feature type="binding site" evidence="1">
    <location>
        <position position="222"/>
    </location>
    <ligand>
        <name>CTP</name>
        <dbReference type="ChEBI" id="CHEBI:37563"/>
        <note>allosteric inhibitor</note>
    </ligand>
</feature>
<feature type="binding site" evidence="1">
    <location>
        <position position="222"/>
    </location>
    <ligand>
        <name>UTP</name>
        <dbReference type="ChEBI" id="CHEBI:46398"/>
    </ligand>
</feature>
<feature type="binding site" evidence="1">
    <location>
        <position position="352"/>
    </location>
    <ligand>
        <name>L-glutamine</name>
        <dbReference type="ChEBI" id="CHEBI:58359"/>
    </ligand>
</feature>
<feature type="binding site" evidence="1">
    <location>
        <begin position="380"/>
        <end position="383"/>
    </location>
    <ligand>
        <name>L-glutamine</name>
        <dbReference type="ChEBI" id="CHEBI:58359"/>
    </ligand>
</feature>
<feature type="binding site" evidence="1">
    <location>
        <position position="403"/>
    </location>
    <ligand>
        <name>L-glutamine</name>
        <dbReference type="ChEBI" id="CHEBI:58359"/>
    </ligand>
</feature>
<feature type="binding site" evidence="1">
    <location>
        <position position="464"/>
    </location>
    <ligand>
        <name>L-glutamine</name>
        <dbReference type="ChEBI" id="CHEBI:58359"/>
    </ligand>
</feature>
<protein>
    <recommendedName>
        <fullName evidence="1">CTP synthase</fullName>
        <ecNumber evidence="1">6.3.4.2</ecNumber>
    </recommendedName>
    <alternativeName>
        <fullName evidence="1">Cytidine 5'-triphosphate synthase</fullName>
    </alternativeName>
    <alternativeName>
        <fullName evidence="1">Cytidine triphosphate synthetase</fullName>
        <shortName evidence="1">CTP synthetase</shortName>
        <shortName evidence="1">CTPS</shortName>
    </alternativeName>
    <alternativeName>
        <fullName evidence="1">UTP--ammonia ligase</fullName>
    </alternativeName>
</protein>
<gene>
    <name evidence="1" type="primary">pyrG</name>
    <name type="ordered locus">RC0523</name>
</gene>
<evidence type="ECO:0000255" key="1">
    <source>
        <dbReference type="HAMAP-Rule" id="MF_01227"/>
    </source>
</evidence>
<proteinExistence type="inferred from homology"/>
<dbReference type="EC" id="6.3.4.2" evidence="1"/>
<dbReference type="EMBL" id="AE006914">
    <property type="protein sequence ID" value="AAL03061.1"/>
    <property type="molecule type" value="Genomic_DNA"/>
</dbReference>
<dbReference type="PIR" id="C97765">
    <property type="entry name" value="C97765"/>
</dbReference>
<dbReference type="RefSeq" id="WP_010977162.1">
    <property type="nucleotide sequence ID" value="NC_003103.1"/>
</dbReference>
<dbReference type="SMR" id="Q92I97"/>
<dbReference type="MEROPS" id="C26.964"/>
<dbReference type="GeneID" id="928731"/>
<dbReference type="KEGG" id="rco:RC0523"/>
<dbReference type="PATRIC" id="fig|272944.4.peg.598"/>
<dbReference type="HOGENOM" id="CLU_011675_5_0_5"/>
<dbReference type="UniPathway" id="UPA00159">
    <property type="reaction ID" value="UER00277"/>
</dbReference>
<dbReference type="Proteomes" id="UP000000816">
    <property type="component" value="Chromosome"/>
</dbReference>
<dbReference type="GO" id="GO:0097268">
    <property type="term" value="C:cytoophidium"/>
    <property type="evidence" value="ECO:0007669"/>
    <property type="project" value="TreeGrafter"/>
</dbReference>
<dbReference type="GO" id="GO:0005737">
    <property type="term" value="C:cytoplasm"/>
    <property type="evidence" value="ECO:0007669"/>
    <property type="project" value="TreeGrafter"/>
</dbReference>
<dbReference type="GO" id="GO:0005524">
    <property type="term" value="F:ATP binding"/>
    <property type="evidence" value="ECO:0007669"/>
    <property type="project" value="UniProtKB-KW"/>
</dbReference>
<dbReference type="GO" id="GO:0003883">
    <property type="term" value="F:CTP synthase activity"/>
    <property type="evidence" value="ECO:0007669"/>
    <property type="project" value="UniProtKB-UniRule"/>
</dbReference>
<dbReference type="GO" id="GO:0004359">
    <property type="term" value="F:glutaminase activity"/>
    <property type="evidence" value="ECO:0007669"/>
    <property type="project" value="RHEA"/>
</dbReference>
<dbReference type="GO" id="GO:0042802">
    <property type="term" value="F:identical protein binding"/>
    <property type="evidence" value="ECO:0007669"/>
    <property type="project" value="TreeGrafter"/>
</dbReference>
<dbReference type="GO" id="GO:0046872">
    <property type="term" value="F:metal ion binding"/>
    <property type="evidence" value="ECO:0007669"/>
    <property type="project" value="UniProtKB-KW"/>
</dbReference>
<dbReference type="GO" id="GO:0044210">
    <property type="term" value="P:'de novo' CTP biosynthetic process"/>
    <property type="evidence" value="ECO:0007669"/>
    <property type="project" value="UniProtKB-UniRule"/>
</dbReference>
<dbReference type="GO" id="GO:0019856">
    <property type="term" value="P:pyrimidine nucleobase biosynthetic process"/>
    <property type="evidence" value="ECO:0007669"/>
    <property type="project" value="TreeGrafter"/>
</dbReference>
<dbReference type="CDD" id="cd03113">
    <property type="entry name" value="CTPS_N"/>
    <property type="match status" value="1"/>
</dbReference>
<dbReference type="CDD" id="cd01746">
    <property type="entry name" value="GATase1_CTP_Synthase"/>
    <property type="match status" value="1"/>
</dbReference>
<dbReference type="FunFam" id="3.40.50.300:FF:000009">
    <property type="entry name" value="CTP synthase"/>
    <property type="match status" value="1"/>
</dbReference>
<dbReference type="FunFam" id="3.40.50.880:FF:000002">
    <property type="entry name" value="CTP synthase"/>
    <property type="match status" value="1"/>
</dbReference>
<dbReference type="Gene3D" id="3.40.50.880">
    <property type="match status" value="1"/>
</dbReference>
<dbReference type="Gene3D" id="3.40.50.300">
    <property type="entry name" value="P-loop containing nucleotide triphosphate hydrolases"/>
    <property type="match status" value="1"/>
</dbReference>
<dbReference type="HAMAP" id="MF_01227">
    <property type="entry name" value="PyrG"/>
    <property type="match status" value="1"/>
</dbReference>
<dbReference type="InterPro" id="IPR029062">
    <property type="entry name" value="Class_I_gatase-like"/>
</dbReference>
<dbReference type="InterPro" id="IPR004468">
    <property type="entry name" value="CTP_synthase"/>
</dbReference>
<dbReference type="InterPro" id="IPR017456">
    <property type="entry name" value="CTP_synthase_N"/>
</dbReference>
<dbReference type="InterPro" id="IPR017926">
    <property type="entry name" value="GATASE"/>
</dbReference>
<dbReference type="InterPro" id="IPR033828">
    <property type="entry name" value="GATase1_CTP_Synthase"/>
</dbReference>
<dbReference type="InterPro" id="IPR027417">
    <property type="entry name" value="P-loop_NTPase"/>
</dbReference>
<dbReference type="NCBIfam" id="NF003792">
    <property type="entry name" value="PRK05380.1"/>
    <property type="match status" value="1"/>
</dbReference>
<dbReference type="NCBIfam" id="TIGR00337">
    <property type="entry name" value="PyrG"/>
    <property type="match status" value="1"/>
</dbReference>
<dbReference type="PANTHER" id="PTHR11550">
    <property type="entry name" value="CTP SYNTHASE"/>
    <property type="match status" value="1"/>
</dbReference>
<dbReference type="PANTHER" id="PTHR11550:SF0">
    <property type="entry name" value="CTP SYNTHASE-RELATED"/>
    <property type="match status" value="1"/>
</dbReference>
<dbReference type="Pfam" id="PF06418">
    <property type="entry name" value="CTP_synth_N"/>
    <property type="match status" value="1"/>
</dbReference>
<dbReference type="Pfam" id="PF00117">
    <property type="entry name" value="GATase"/>
    <property type="match status" value="1"/>
</dbReference>
<dbReference type="SUPFAM" id="SSF52317">
    <property type="entry name" value="Class I glutamine amidotransferase-like"/>
    <property type="match status" value="1"/>
</dbReference>
<dbReference type="SUPFAM" id="SSF52540">
    <property type="entry name" value="P-loop containing nucleoside triphosphate hydrolases"/>
    <property type="match status" value="1"/>
</dbReference>
<dbReference type="PROSITE" id="PS51273">
    <property type="entry name" value="GATASE_TYPE_1"/>
    <property type="match status" value="1"/>
</dbReference>